<protein>
    <recommendedName>
        <fullName>COP9 signalosome complex subunit 8</fullName>
        <shortName>Signalosome subunit 8</shortName>
    </recommendedName>
</protein>
<name>CSN8_PONAB</name>
<sequence>MPVAVMAESAFSFKKLLDQCENQELEAPGGIATPPVYGQLLALYLLHNDMNNARYLWKRIPPAIKSANSELGGIWSVGQRIWQRDFPGIYTTINAHQWSETVQPIMEALRDATRRRAFALVSQAYTSIVADDFAAFVGLPVEEAVKGILEQGWQADSTTRMVLPRKPVAGALDVSFNKFIPLSEPAPVPPIPNEQQLARLTDYVAFLEN</sequence>
<evidence type="ECO:0000250" key="1"/>
<evidence type="ECO:0000250" key="2">
    <source>
        <dbReference type="UniProtKB" id="Q99627"/>
    </source>
</evidence>
<evidence type="ECO:0000255" key="3">
    <source>
        <dbReference type="PROSITE-ProRule" id="PRU01185"/>
    </source>
</evidence>
<evidence type="ECO:0000305" key="4"/>
<dbReference type="EMBL" id="CR857307">
    <property type="protein sequence ID" value="CAH89603.1"/>
    <property type="molecule type" value="mRNA"/>
</dbReference>
<dbReference type="RefSeq" id="NP_001124713.1">
    <property type="nucleotide sequence ID" value="NM_001131241.2"/>
</dbReference>
<dbReference type="SMR" id="Q5RF54"/>
<dbReference type="FunCoup" id="Q5RF54">
    <property type="interactions" value="4135"/>
</dbReference>
<dbReference type="STRING" id="9601.ENSPPYP00000014881"/>
<dbReference type="Ensembl" id="ENSPPYT00000015478.3">
    <property type="protein sequence ID" value="ENSPPYP00000014881.2"/>
    <property type="gene ID" value="ENSPPYG00000013308.3"/>
</dbReference>
<dbReference type="GeneID" id="100171561"/>
<dbReference type="KEGG" id="pon:100171561"/>
<dbReference type="CTD" id="10920"/>
<dbReference type="eggNOG" id="KOG4414">
    <property type="taxonomic scope" value="Eukaryota"/>
</dbReference>
<dbReference type="GeneTree" id="ENSGT00390000000977"/>
<dbReference type="HOGENOM" id="CLU_098091_1_1_1"/>
<dbReference type="InParanoid" id="Q5RF54"/>
<dbReference type="OMA" id="MRIPDKL"/>
<dbReference type="OrthoDB" id="5351233at2759"/>
<dbReference type="TreeFam" id="TF101150"/>
<dbReference type="Proteomes" id="UP000001595">
    <property type="component" value="Chromosome 2B"/>
</dbReference>
<dbReference type="GO" id="GO:0008180">
    <property type="term" value="C:COP9 signalosome"/>
    <property type="evidence" value="ECO:0007669"/>
    <property type="project" value="UniProtKB-KW"/>
</dbReference>
<dbReference type="GO" id="GO:0005829">
    <property type="term" value="C:cytosol"/>
    <property type="evidence" value="ECO:0007669"/>
    <property type="project" value="Ensembl"/>
</dbReference>
<dbReference type="GO" id="GO:0005654">
    <property type="term" value="C:nucleoplasm"/>
    <property type="evidence" value="ECO:0007669"/>
    <property type="project" value="Ensembl"/>
</dbReference>
<dbReference type="GO" id="GO:0048471">
    <property type="term" value="C:perinuclear region of cytoplasm"/>
    <property type="evidence" value="ECO:0007669"/>
    <property type="project" value="Ensembl"/>
</dbReference>
<dbReference type="GO" id="GO:0010387">
    <property type="term" value="P:COP9 signalosome assembly"/>
    <property type="evidence" value="ECO:0007669"/>
    <property type="project" value="InterPro"/>
</dbReference>
<dbReference type="GO" id="GO:0008285">
    <property type="term" value="P:negative regulation of cell population proliferation"/>
    <property type="evidence" value="ECO:0007669"/>
    <property type="project" value="Ensembl"/>
</dbReference>
<dbReference type="GO" id="GO:0000338">
    <property type="term" value="P:protein deneddylation"/>
    <property type="evidence" value="ECO:0007669"/>
    <property type="project" value="Ensembl"/>
</dbReference>
<dbReference type="FunFam" id="1.25.40.990:FF:000011">
    <property type="entry name" value="COP9 signalosome complex subunit 8-like Protein"/>
    <property type="match status" value="1"/>
</dbReference>
<dbReference type="Gene3D" id="1.25.40.990">
    <property type="match status" value="1"/>
</dbReference>
<dbReference type="InterPro" id="IPR033205">
    <property type="entry name" value="COP9_CSN8"/>
</dbReference>
<dbReference type="InterPro" id="IPR033464">
    <property type="entry name" value="CSN8_PSD8_EIF3K"/>
</dbReference>
<dbReference type="InterPro" id="IPR000717">
    <property type="entry name" value="PCI_dom"/>
</dbReference>
<dbReference type="PANTHER" id="PTHR13339">
    <property type="entry name" value="COP9 SIGNALOSOME COMPLEX SUBUNIT 8"/>
    <property type="match status" value="1"/>
</dbReference>
<dbReference type="PANTHER" id="PTHR13339:SF0">
    <property type="entry name" value="COP9 SIGNALOSOME COMPLEX SUBUNIT 8"/>
    <property type="match status" value="1"/>
</dbReference>
<dbReference type="Pfam" id="PF10075">
    <property type="entry name" value="CSN8_PSD8_EIF3K"/>
    <property type="match status" value="1"/>
</dbReference>
<dbReference type="PROSITE" id="PS50250">
    <property type="entry name" value="PCI"/>
    <property type="match status" value="1"/>
</dbReference>
<reference key="1">
    <citation type="submission" date="2004-11" db="EMBL/GenBank/DDBJ databases">
        <authorList>
            <consortium name="The German cDNA consortium"/>
        </authorList>
    </citation>
    <scope>NUCLEOTIDE SEQUENCE [LARGE SCALE MRNA]</scope>
    <source>
        <tissue>Kidney</tissue>
    </source>
</reference>
<feature type="chain" id="PRO_0000121009" description="COP9 signalosome complex subunit 8">
    <location>
        <begin position="1"/>
        <end position="209"/>
    </location>
</feature>
<feature type="domain" description="PCI" evidence="3">
    <location>
        <begin position="8"/>
        <end position="179"/>
    </location>
</feature>
<feature type="modified residue" description="Phosphoserine" evidence="2">
    <location>
        <position position="175"/>
    </location>
</feature>
<gene>
    <name type="primary">COPS8</name>
    <name type="synonym">CSN8</name>
</gene>
<accession>Q5RF54</accession>
<organism>
    <name type="scientific">Pongo abelii</name>
    <name type="common">Sumatran orangutan</name>
    <name type="synonym">Pongo pygmaeus abelii</name>
    <dbReference type="NCBI Taxonomy" id="9601"/>
    <lineage>
        <taxon>Eukaryota</taxon>
        <taxon>Metazoa</taxon>
        <taxon>Chordata</taxon>
        <taxon>Craniata</taxon>
        <taxon>Vertebrata</taxon>
        <taxon>Euteleostomi</taxon>
        <taxon>Mammalia</taxon>
        <taxon>Eutheria</taxon>
        <taxon>Euarchontoglires</taxon>
        <taxon>Primates</taxon>
        <taxon>Haplorrhini</taxon>
        <taxon>Catarrhini</taxon>
        <taxon>Hominidae</taxon>
        <taxon>Pongo</taxon>
    </lineage>
</organism>
<comment type="function">
    <text evidence="1">Component of the COP9 signalosome complex (CSN), a complex involved in various cellular and developmental processes. The CSN complex is an essential regulator of the ubiquitin (Ubl) conjugation pathway by mediating the deneddylation of the cullin subunits of SCF-type E3 ligase complexes, leading to decrease the Ubl ligase activity of SCF-type complexes such as SCF, CSA or DDB2. The complex is also involved in phosphorylation of p53/TP53, c-jun/JUN, IkappaBalpha/NFKBIA, ITPK1 and IRF8/ICSBP, possibly via its association with CK2 and PKD kinases. CSN-dependent phosphorylation of TP53 and JUN promotes and protects degradation by the Ubl system, respectively (By similarity).</text>
</comment>
<comment type="subunit">
    <text evidence="2">Component of the CSN complex, composed of COPS1/GPS1, COPS2, COPS3, COPS4, COPS5, COPS6, COPS7 (COPS7A or COPS7B), COPS8 and COPS9. In the complex, it probably interacts directly with COPS3, COPS4 and COPS7 (COPS7A or COPS7B).</text>
</comment>
<comment type="subcellular location">
    <subcellularLocation>
        <location evidence="1">Cytoplasm</location>
    </subcellularLocation>
    <subcellularLocation>
        <location evidence="1">Nucleus</location>
    </subcellularLocation>
</comment>
<comment type="similarity">
    <text evidence="4">Belongs to the CSN8 family.</text>
</comment>
<keyword id="KW-0963">Cytoplasm</keyword>
<keyword id="KW-0539">Nucleus</keyword>
<keyword id="KW-0597">Phosphoprotein</keyword>
<keyword id="KW-1185">Reference proteome</keyword>
<keyword id="KW-0736">Signalosome</keyword>
<proteinExistence type="evidence at transcript level"/>